<name>PRMC_STAA8</name>
<accession>Q2FWE1</accession>
<protein>
    <recommendedName>
        <fullName evidence="1">Release factor glutamine methyltransferase</fullName>
        <shortName evidence="1">RF MTase</shortName>
        <ecNumber evidence="1">2.1.1.297</ecNumber>
    </recommendedName>
    <alternativeName>
        <fullName evidence="1">N5-glutamine methyltransferase PrmC</fullName>
    </alternativeName>
    <alternativeName>
        <fullName evidence="1">Protein-(glutamine-N5) MTase PrmC</fullName>
    </alternativeName>
    <alternativeName>
        <fullName evidence="1">Protein-glutamine N-methyltransferase PrmC</fullName>
    </alternativeName>
</protein>
<sequence>MVNYKEKLDEAIHLTQQKGFEQTRAEWLMLDVFQWTRTDFVVHMHDDMPKAMIMKFDLALQRMLLGEPIQYIVGFASFYGRTFDVNSNCLIPRPETEEVMLHFLQQLEDDATIVDIGTGSGVLAITLKCEKPDLNVIATDISLEAMNMARNNAEKHQSQIQFLTGDALKPLINEGIKLNGLISNPPYIDEKDMVTMSPTVTRFEPHQALFADNHGYAIYESIIEDLPHVMEKGSPVVFEIGYNQGEALKSIILNKFPDKKIDIIKDINGHDRIVSFKW</sequence>
<evidence type="ECO:0000255" key="1">
    <source>
        <dbReference type="HAMAP-Rule" id="MF_02126"/>
    </source>
</evidence>
<evidence type="ECO:0000305" key="2"/>
<proteinExistence type="inferred from homology"/>
<reference key="1">
    <citation type="book" date="2006" name="Gram positive pathogens, 2nd edition">
        <title>The Staphylococcus aureus NCTC 8325 genome.</title>
        <editorList>
            <person name="Fischetti V."/>
            <person name="Novick R."/>
            <person name="Ferretti J."/>
            <person name="Portnoy D."/>
            <person name="Rood J."/>
        </editorList>
        <authorList>
            <person name="Gillaspy A.F."/>
            <person name="Worrell V."/>
            <person name="Orvis J."/>
            <person name="Roe B.A."/>
            <person name="Dyer D.W."/>
            <person name="Iandolo J.J."/>
        </authorList>
    </citation>
    <scope>NUCLEOTIDE SEQUENCE [LARGE SCALE GENOMIC DNA]</scope>
    <source>
        <strain>NCTC 8325 / PS 47</strain>
    </source>
</reference>
<gene>
    <name evidence="1" type="primary">prmC</name>
    <name type="ordered locus">SAOUHSC_02358</name>
</gene>
<feature type="chain" id="PRO_0000414543" description="Release factor glutamine methyltransferase">
    <location>
        <begin position="1"/>
        <end position="278"/>
    </location>
</feature>
<feature type="binding site" evidence="1">
    <location>
        <begin position="117"/>
        <end position="121"/>
    </location>
    <ligand>
        <name>S-adenosyl-L-methionine</name>
        <dbReference type="ChEBI" id="CHEBI:59789"/>
    </ligand>
</feature>
<feature type="binding site" evidence="1">
    <location>
        <position position="140"/>
    </location>
    <ligand>
        <name>S-adenosyl-L-methionine</name>
        <dbReference type="ChEBI" id="CHEBI:59789"/>
    </ligand>
</feature>
<feature type="binding site" evidence="1">
    <location>
        <begin position="184"/>
        <end position="187"/>
    </location>
    <ligand>
        <name>substrate</name>
    </ligand>
</feature>
<feature type="binding site" evidence="1">
    <location>
        <position position="184"/>
    </location>
    <ligand>
        <name>S-adenosyl-L-methionine</name>
        <dbReference type="ChEBI" id="CHEBI:59789"/>
    </ligand>
</feature>
<organism>
    <name type="scientific">Staphylococcus aureus (strain NCTC 8325 / PS 47)</name>
    <dbReference type="NCBI Taxonomy" id="93061"/>
    <lineage>
        <taxon>Bacteria</taxon>
        <taxon>Bacillati</taxon>
        <taxon>Bacillota</taxon>
        <taxon>Bacilli</taxon>
        <taxon>Bacillales</taxon>
        <taxon>Staphylococcaceae</taxon>
        <taxon>Staphylococcus</taxon>
    </lineage>
</organism>
<dbReference type="EC" id="2.1.1.297" evidence="1"/>
<dbReference type="EMBL" id="CP000253">
    <property type="protein sequence ID" value="ABD31389.1"/>
    <property type="status" value="ALT_FRAME"/>
    <property type="molecule type" value="Genomic_DNA"/>
</dbReference>
<dbReference type="RefSeq" id="WP_000248735.1">
    <property type="nucleotide sequence ID" value="NZ_LS483365.1"/>
</dbReference>
<dbReference type="RefSeq" id="WP_011443650.1">
    <property type="nucleotide sequence ID" value="NC_007795.1"/>
</dbReference>
<dbReference type="RefSeq" id="YP_500834.1">
    <property type="nucleotide sequence ID" value="NC_007795.1"/>
</dbReference>
<dbReference type="SMR" id="Q2FWE1"/>
<dbReference type="STRING" id="93061.SAOUHSC_02358"/>
<dbReference type="PaxDb" id="1280-SAXN108_2362"/>
<dbReference type="GeneID" id="3919401"/>
<dbReference type="KEGG" id="sao:SAOUHSC_02358"/>
<dbReference type="PATRIC" id="fig|93061.5.peg.2135"/>
<dbReference type="eggNOG" id="COG2890">
    <property type="taxonomic scope" value="Bacteria"/>
</dbReference>
<dbReference type="HOGENOM" id="CLU_018398_3_2_9"/>
<dbReference type="OrthoDB" id="9800643at2"/>
<dbReference type="Proteomes" id="UP000008816">
    <property type="component" value="Chromosome"/>
</dbReference>
<dbReference type="GO" id="GO:0003676">
    <property type="term" value="F:nucleic acid binding"/>
    <property type="evidence" value="ECO:0007669"/>
    <property type="project" value="InterPro"/>
</dbReference>
<dbReference type="GO" id="GO:0102559">
    <property type="term" value="F:protein-(glutamine-N5) methyltransferase activity"/>
    <property type="evidence" value="ECO:0007669"/>
    <property type="project" value="UniProtKB-EC"/>
</dbReference>
<dbReference type="GO" id="GO:0036009">
    <property type="term" value="F:protein-glutamine N-methyltransferase activity"/>
    <property type="evidence" value="ECO:0000318"/>
    <property type="project" value="GO_Central"/>
</dbReference>
<dbReference type="GO" id="GO:0032259">
    <property type="term" value="P:methylation"/>
    <property type="evidence" value="ECO:0007669"/>
    <property type="project" value="UniProtKB-KW"/>
</dbReference>
<dbReference type="GO" id="GO:0006415">
    <property type="term" value="P:translational termination"/>
    <property type="evidence" value="ECO:0000318"/>
    <property type="project" value="GO_Central"/>
</dbReference>
<dbReference type="CDD" id="cd02440">
    <property type="entry name" value="AdoMet_MTases"/>
    <property type="match status" value="1"/>
</dbReference>
<dbReference type="Gene3D" id="1.10.8.10">
    <property type="entry name" value="DNA helicase RuvA subunit, C-terminal domain"/>
    <property type="match status" value="1"/>
</dbReference>
<dbReference type="Gene3D" id="3.40.50.150">
    <property type="entry name" value="Vaccinia Virus protein VP39"/>
    <property type="match status" value="1"/>
</dbReference>
<dbReference type="HAMAP" id="MF_02126">
    <property type="entry name" value="RF_methyltr_PrmC"/>
    <property type="match status" value="1"/>
</dbReference>
<dbReference type="InterPro" id="IPR002052">
    <property type="entry name" value="DNA_methylase_N6_adenine_CS"/>
</dbReference>
<dbReference type="InterPro" id="IPR004556">
    <property type="entry name" value="HemK-like"/>
</dbReference>
<dbReference type="InterPro" id="IPR050320">
    <property type="entry name" value="N5-glutamine_MTase"/>
</dbReference>
<dbReference type="InterPro" id="IPR040758">
    <property type="entry name" value="PrmC_N"/>
</dbReference>
<dbReference type="InterPro" id="IPR019874">
    <property type="entry name" value="RF_methyltr_PrmC"/>
</dbReference>
<dbReference type="InterPro" id="IPR029063">
    <property type="entry name" value="SAM-dependent_MTases_sf"/>
</dbReference>
<dbReference type="InterPro" id="IPR007848">
    <property type="entry name" value="Small_mtfrase_dom"/>
</dbReference>
<dbReference type="NCBIfam" id="TIGR00536">
    <property type="entry name" value="hemK_fam"/>
    <property type="match status" value="1"/>
</dbReference>
<dbReference type="NCBIfam" id="TIGR03534">
    <property type="entry name" value="RF_mod_PrmC"/>
    <property type="match status" value="1"/>
</dbReference>
<dbReference type="PANTHER" id="PTHR18895">
    <property type="entry name" value="HEMK METHYLTRANSFERASE"/>
    <property type="match status" value="1"/>
</dbReference>
<dbReference type="PANTHER" id="PTHR18895:SF74">
    <property type="entry name" value="MTRF1L RELEASE FACTOR GLUTAMINE METHYLTRANSFERASE"/>
    <property type="match status" value="1"/>
</dbReference>
<dbReference type="Pfam" id="PF05175">
    <property type="entry name" value="MTS"/>
    <property type="match status" value="1"/>
</dbReference>
<dbReference type="Pfam" id="PF17827">
    <property type="entry name" value="PrmC_N"/>
    <property type="match status" value="1"/>
</dbReference>
<dbReference type="SUPFAM" id="SSF53335">
    <property type="entry name" value="S-adenosyl-L-methionine-dependent methyltransferases"/>
    <property type="match status" value="1"/>
</dbReference>
<comment type="function">
    <text evidence="1">Methylates the class 1 translation termination release factors RF1/PrfA and RF2/PrfB on the glutamine residue of the universally conserved GGQ motif.</text>
</comment>
<comment type="catalytic activity">
    <reaction evidence="1">
        <text>L-glutaminyl-[peptide chain release factor] + S-adenosyl-L-methionine = N(5)-methyl-L-glutaminyl-[peptide chain release factor] + S-adenosyl-L-homocysteine + H(+)</text>
        <dbReference type="Rhea" id="RHEA:42896"/>
        <dbReference type="Rhea" id="RHEA-COMP:10271"/>
        <dbReference type="Rhea" id="RHEA-COMP:10272"/>
        <dbReference type="ChEBI" id="CHEBI:15378"/>
        <dbReference type="ChEBI" id="CHEBI:30011"/>
        <dbReference type="ChEBI" id="CHEBI:57856"/>
        <dbReference type="ChEBI" id="CHEBI:59789"/>
        <dbReference type="ChEBI" id="CHEBI:61891"/>
        <dbReference type="EC" id="2.1.1.297"/>
    </reaction>
</comment>
<comment type="similarity">
    <text evidence="1">Belongs to the protein N5-glutamine methyltransferase family. PrmC subfamily.</text>
</comment>
<comment type="sequence caution" evidence="2">
    <conflict type="erroneous initiation">
        <sequence resource="EMBL-CDS" id="ABD31389"/>
    </conflict>
    <text>Truncated N-terminus.</text>
</comment>
<keyword id="KW-0489">Methyltransferase</keyword>
<keyword id="KW-1185">Reference proteome</keyword>
<keyword id="KW-0949">S-adenosyl-L-methionine</keyword>
<keyword id="KW-0808">Transferase</keyword>